<dbReference type="EC" id="1.14.-.-" evidence="1"/>
<dbReference type="EMBL" id="CP000227">
    <property type="protein sequence ID" value="ACM12303.1"/>
    <property type="molecule type" value="Genomic_DNA"/>
</dbReference>
<dbReference type="SMR" id="B9IX93"/>
<dbReference type="KEGG" id="bcq:BCQ_1875"/>
<dbReference type="HOGENOM" id="CLU_038878_1_0_9"/>
<dbReference type="Proteomes" id="UP000000441">
    <property type="component" value="Chromosome"/>
</dbReference>
<dbReference type="GO" id="GO:0016705">
    <property type="term" value="F:oxidoreductase activity, acting on paired donors, with incorporation or reduction of molecular oxygen"/>
    <property type="evidence" value="ECO:0007669"/>
    <property type="project" value="UniProtKB-UniRule"/>
</dbReference>
<dbReference type="GO" id="GO:0006400">
    <property type="term" value="P:tRNA modification"/>
    <property type="evidence" value="ECO:0007669"/>
    <property type="project" value="UniProtKB-UniRule"/>
</dbReference>
<dbReference type="CDD" id="cd01518">
    <property type="entry name" value="RHOD_YceA"/>
    <property type="match status" value="1"/>
</dbReference>
<dbReference type="Gene3D" id="3.30.70.100">
    <property type="match status" value="1"/>
</dbReference>
<dbReference type="Gene3D" id="3.40.250.10">
    <property type="entry name" value="Rhodanese-like domain"/>
    <property type="match status" value="1"/>
</dbReference>
<dbReference type="HAMAP" id="MF_00469">
    <property type="entry name" value="TrhO"/>
    <property type="match status" value="1"/>
</dbReference>
<dbReference type="InterPro" id="IPR001763">
    <property type="entry name" value="Rhodanese-like_dom"/>
</dbReference>
<dbReference type="InterPro" id="IPR036873">
    <property type="entry name" value="Rhodanese-like_dom_sf"/>
</dbReference>
<dbReference type="InterPro" id="IPR022111">
    <property type="entry name" value="Rhodanese_C"/>
</dbReference>
<dbReference type="InterPro" id="IPR020936">
    <property type="entry name" value="TrhO"/>
</dbReference>
<dbReference type="InterPro" id="IPR040503">
    <property type="entry name" value="TRHO_N"/>
</dbReference>
<dbReference type="NCBIfam" id="NF001135">
    <property type="entry name" value="PRK00142.1-3"/>
    <property type="match status" value="1"/>
</dbReference>
<dbReference type="PANTHER" id="PTHR43268:SF3">
    <property type="entry name" value="RHODANESE-LIKE DOMAIN-CONTAINING PROTEIN 7-RELATED"/>
    <property type="match status" value="1"/>
</dbReference>
<dbReference type="PANTHER" id="PTHR43268">
    <property type="entry name" value="THIOSULFATE SULFURTRANSFERASE/RHODANESE-LIKE DOMAIN-CONTAINING PROTEIN 2"/>
    <property type="match status" value="1"/>
</dbReference>
<dbReference type="Pfam" id="PF00581">
    <property type="entry name" value="Rhodanese"/>
    <property type="match status" value="1"/>
</dbReference>
<dbReference type="Pfam" id="PF12368">
    <property type="entry name" value="Rhodanese_C"/>
    <property type="match status" value="1"/>
</dbReference>
<dbReference type="Pfam" id="PF17773">
    <property type="entry name" value="UPF0176_N"/>
    <property type="match status" value="1"/>
</dbReference>
<dbReference type="SMART" id="SM00450">
    <property type="entry name" value="RHOD"/>
    <property type="match status" value="1"/>
</dbReference>
<dbReference type="SUPFAM" id="SSF52821">
    <property type="entry name" value="Rhodanese/Cell cycle control phosphatase"/>
    <property type="match status" value="1"/>
</dbReference>
<dbReference type="PROSITE" id="PS50206">
    <property type="entry name" value="RHODANESE_3"/>
    <property type="match status" value="1"/>
</dbReference>
<keyword id="KW-0560">Oxidoreductase</keyword>
<keyword id="KW-0819">tRNA processing</keyword>
<protein>
    <recommendedName>
        <fullName evidence="1">tRNA uridine(34) hydroxylase</fullName>
        <ecNumber evidence="1">1.14.-.-</ecNumber>
    </recommendedName>
    <alternativeName>
        <fullName evidence="1">tRNA hydroxylation protein O</fullName>
    </alternativeName>
</protein>
<proteinExistence type="inferred from homology"/>
<evidence type="ECO:0000255" key="1">
    <source>
        <dbReference type="HAMAP-Rule" id="MF_00469"/>
    </source>
</evidence>
<organism>
    <name type="scientific">Bacillus cereus (strain Q1)</name>
    <dbReference type="NCBI Taxonomy" id="361100"/>
    <lineage>
        <taxon>Bacteria</taxon>
        <taxon>Bacillati</taxon>
        <taxon>Bacillota</taxon>
        <taxon>Bacilli</taxon>
        <taxon>Bacillales</taxon>
        <taxon>Bacillaceae</taxon>
        <taxon>Bacillus</taxon>
        <taxon>Bacillus cereus group</taxon>
    </lineage>
</organism>
<feature type="chain" id="PRO_1000135462" description="tRNA uridine(34) hydroxylase">
    <location>
        <begin position="1"/>
        <end position="319"/>
    </location>
</feature>
<feature type="domain" description="Rhodanese" evidence="1">
    <location>
        <begin position="127"/>
        <end position="221"/>
    </location>
</feature>
<feature type="active site" description="Cysteine persulfide intermediate" evidence="1">
    <location>
        <position position="181"/>
    </location>
</feature>
<accession>B9IX93</accession>
<comment type="function">
    <text evidence="1">Catalyzes oxygen-dependent 5-hydroxyuridine (ho5U) modification at position 34 in tRNAs.</text>
</comment>
<comment type="catalytic activity">
    <reaction evidence="1">
        <text>uridine(34) in tRNA + AH2 + O2 = 5-hydroxyuridine(34) in tRNA + A + H2O</text>
        <dbReference type="Rhea" id="RHEA:64224"/>
        <dbReference type="Rhea" id="RHEA-COMP:11727"/>
        <dbReference type="Rhea" id="RHEA-COMP:13381"/>
        <dbReference type="ChEBI" id="CHEBI:13193"/>
        <dbReference type="ChEBI" id="CHEBI:15377"/>
        <dbReference type="ChEBI" id="CHEBI:15379"/>
        <dbReference type="ChEBI" id="CHEBI:17499"/>
        <dbReference type="ChEBI" id="CHEBI:65315"/>
        <dbReference type="ChEBI" id="CHEBI:136877"/>
    </reaction>
</comment>
<comment type="similarity">
    <text evidence="1">Belongs to the TrhO family.</text>
</comment>
<gene>
    <name evidence="1" type="primary">trhO</name>
    <name type="ordered locus">BCQ_1875</name>
</gene>
<reference key="1">
    <citation type="journal article" date="2009" name="J. Bacteriol.">
        <title>Complete genome sequence of the extremophilic Bacillus cereus strain Q1 with industrial applications.</title>
        <authorList>
            <person name="Xiong Z."/>
            <person name="Jiang Y."/>
            <person name="Qi D."/>
            <person name="Lu H."/>
            <person name="Yang F."/>
            <person name="Yang J."/>
            <person name="Chen L."/>
            <person name="Sun L."/>
            <person name="Xu X."/>
            <person name="Xue Y."/>
            <person name="Zhu Y."/>
            <person name="Jin Q."/>
        </authorList>
    </citation>
    <scope>NUCLEOTIDE SEQUENCE [LARGE SCALE GENOMIC DNA]</scope>
    <source>
        <strain>Q1</strain>
    </source>
</reference>
<sequence length="319" mass="36805">MATTKPYRVLLYYMYTTIENPEEFAAEHLAFCNSLELKGRILVAKEGINGTCSGTVEQTEKYMEAMNNDPRFDGIVFKIDEADGHAFKKMHVRPRPELVTLRLEDDINPHEITGKYLEPKDFYEAMKQEDTVIIDARNDYEFDLGHFKGAIKPDIESFRELPDWIRENKEILEGKKILTYCTGGIRCEKFSGWLVREGYEDVSQLHGGIVTYGKDPEVQGELWDGQCYVFDERIAVPVNQKEHVIVGKDHFTGEPCERYVNCSNPECNKKILCSEENEAKYLRACSHECRVSPRNRYVIQHELTEEQVAAALEKIEAEK</sequence>
<name>TRHO_BACCQ</name>